<name>UBIA_SHEWM</name>
<proteinExistence type="inferred from homology"/>
<protein>
    <recommendedName>
        <fullName evidence="1">4-hydroxybenzoate octaprenyltransferase</fullName>
        <ecNumber evidence="1">2.5.1.39</ecNumber>
    </recommendedName>
    <alternativeName>
        <fullName evidence="1">4-HB polyprenyltransferase</fullName>
    </alternativeName>
</protein>
<feature type="chain" id="PRO_1000186692" description="4-hydroxybenzoate octaprenyltransferase">
    <location>
        <begin position="1"/>
        <end position="286"/>
    </location>
</feature>
<feature type="transmembrane region" description="Helical" evidence="1">
    <location>
        <begin position="20"/>
        <end position="40"/>
    </location>
</feature>
<feature type="transmembrane region" description="Helical" evidence="1">
    <location>
        <begin position="43"/>
        <end position="63"/>
    </location>
</feature>
<feature type="transmembrane region" description="Helical" evidence="1">
    <location>
        <begin position="96"/>
        <end position="116"/>
    </location>
</feature>
<feature type="transmembrane region" description="Helical" evidence="1">
    <location>
        <begin position="142"/>
        <end position="162"/>
    </location>
</feature>
<feature type="transmembrane region" description="Helical" evidence="1">
    <location>
        <begin position="167"/>
        <end position="187"/>
    </location>
</feature>
<feature type="transmembrane region" description="Helical" evidence="1">
    <location>
        <begin position="210"/>
        <end position="230"/>
    </location>
</feature>
<feature type="transmembrane region" description="Helical" evidence="1">
    <location>
        <begin position="234"/>
        <end position="254"/>
    </location>
</feature>
<organism>
    <name type="scientific">Shewanella woodyi (strain ATCC 51908 / MS32)</name>
    <dbReference type="NCBI Taxonomy" id="392500"/>
    <lineage>
        <taxon>Bacteria</taxon>
        <taxon>Pseudomonadati</taxon>
        <taxon>Pseudomonadota</taxon>
        <taxon>Gammaproteobacteria</taxon>
        <taxon>Alteromonadales</taxon>
        <taxon>Shewanellaceae</taxon>
        <taxon>Shewanella</taxon>
    </lineage>
</organism>
<keyword id="KW-0997">Cell inner membrane</keyword>
<keyword id="KW-1003">Cell membrane</keyword>
<keyword id="KW-0460">Magnesium</keyword>
<keyword id="KW-0472">Membrane</keyword>
<keyword id="KW-1185">Reference proteome</keyword>
<keyword id="KW-0808">Transferase</keyword>
<keyword id="KW-0812">Transmembrane</keyword>
<keyword id="KW-1133">Transmembrane helix</keyword>
<keyword id="KW-0831">Ubiquinone biosynthesis</keyword>
<sequence length="286" mass="31894">MSVKDKLEIYLRLARMDRPIGTLLLMWPCLMALVLAAGGMPDLKVLVIFIIGVVVMRACGCIINDYADRKLDSHVERTKSRPLASGEVSVKEALTLFVVMGLIAFGLVLMLNPLVVQLSFVGIILTIIYPFTKRFTNMPQMFLGVVWSWSIPMAYAAQTGTVPAEAWWLFAANWCWTVAYDTMYAMVDRDDDLKVGIKSTAILFGKYDRQVIALFQLAALACFIIAGWAADRGLVYALGIITFVGFSLYQQKLIYGRERAPCFKAFLNNNWAGLSLFVALGVDYLV</sequence>
<evidence type="ECO:0000255" key="1">
    <source>
        <dbReference type="HAMAP-Rule" id="MF_01635"/>
    </source>
</evidence>
<gene>
    <name evidence="1" type="primary">ubiA</name>
    <name type="ordered locus">Swoo_4497</name>
</gene>
<reference key="1">
    <citation type="submission" date="2008-02" db="EMBL/GenBank/DDBJ databases">
        <title>Complete sequence of Shewanella woodyi ATCC 51908.</title>
        <authorList>
            <consortium name="US DOE Joint Genome Institute"/>
            <person name="Copeland A."/>
            <person name="Lucas S."/>
            <person name="Lapidus A."/>
            <person name="Glavina del Rio T."/>
            <person name="Dalin E."/>
            <person name="Tice H."/>
            <person name="Bruce D."/>
            <person name="Goodwin L."/>
            <person name="Pitluck S."/>
            <person name="Sims D."/>
            <person name="Brettin T."/>
            <person name="Detter J.C."/>
            <person name="Han C."/>
            <person name="Kuske C.R."/>
            <person name="Schmutz J."/>
            <person name="Larimer F."/>
            <person name="Land M."/>
            <person name="Hauser L."/>
            <person name="Kyrpides N."/>
            <person name="Lykidis A."/>
            <person name="Zhao J.-S."/>
            <person name="Richardson P."/>
        </authorList>
    </citation>
    <scope>NUCLEOTIDE SEQUENCE [LARGE SCALE GENOMIC DNA]</scope>
    <source>
        <strain>ATCC 51908 / MS32</strain>
    </source>
</reference>
<dbReference type="EC" id="2.5.1.39" evidence="1"/>
<dbReference type="EMBL" id="CP000961">
    <property type="protein sequence ID" value="ACA88748.1"/>
    <property type="molecule type" value="Genomic_DNA"/>
</dbReference>
<dbReference type="RefSeq" id="WP_012327074.1">
    <property type="nucleotide sequence ID" value="NC_010506.1"/>
</dbReference>
<dbReference type="SMR" id="B1KKU2"/>
<dbReference type="STRING" id="392500.Swoo_4497"/>
<dbReference type="KEGG" id="swd:Swoo_4497"/>
<dbReference type="eggNOG" id="COG0382">
    <property type="taxonomic scope" value="Bacteria"/>
</dbReference>
<dbReference type="HOGENOM" id="CLU_034879_1_0_6"/>
<dbReference type="UniPathway" id="UPA00232"/>
<dbReference type="Proteomes" id="UP000002168">
    <property type="component" value="Chromosome"/>
</dbReference>
<dbReference type="GO" id="GO:0005886">
    <property type="term" value="C:plasma membrane"/>
    <property type="evidence" value="ECO:0007669"/>
    <property type="project" value="UniProtKB-SubCell"/>
</dbReference>
<dbReference type="GO" id="GO:0008412">
    <property type="term" value="F:4-hydroxybenzoate polyprenyltransferase activity"/>
    <property type="evidence" value="ECO:0007669"/>
    <property type="project" value="UniProtKB-UniRule"/>
</dbReference>
<dbReference type="GO" id="GO:0006744">
    <property type="term" value="P:ubiquinone biosynthetic process"/>
    <property type="evidence" value="ECO:0007669"/>
    <property type="project" value="UniProtKB-UniRule"/>
</dbReference>
<dbReference type="CDD" id="cd13959">
    <property type="entry name" value="PT_UbiA_COQ2"/>
    <property type="match status" value="1"/>
</dbReference>
<dbReference type="FunFam" id="1.10.357.140:FF:000002">
    <property type="entry name" value="4-hydroxybenzoate octaprenyltransferase"/>
    <property type="match status" value="1"/>
</dbReference>
<dbReference type="FunFam" id="1.20.120.1780:FF:000001">
    <property type="entry name" value="4-hydroxybenzoate octaprenyltransferase"/>
    <property type="match status" value="1"/>
</dbReference>
<dbReference type="Gene3D" id="1.10.357.140">
    <property type="entry name" value="UbiA prenyltransferase"/>
    <property type="match status" value="1"/>
</dbReference>
<dbReference type="Gene3D" id="1.20.120.1780">
    <property type="entry name" value="UbiA prenyltransferase"/>
    <property type="match status" value="1"/>
</dbReference>
<dbReference type="HAMAP" id="MF_01635">
    <property type="entry name" value="UbiA"/>
    <property type="match status" value="1"/>
</dbReference>
<dbReference type="InterPro" id="IPR006370">
    <property type="entry name" value="HB_polyprenyltransferase-like"/>
</dbReference>
<dbReference type="InterPro" id="IPR039653">
    <property type="entry name" value="Prenyltransferase"/>
</dbReference>
<dbReference type="InterPro" id="IPR000537">
    <property type="entry name" value="UbiA_prenyltransferase"/>
</dbReference>
<dbReference type="InterPro" id="IPR030470">
    <property type="entry name" value="UbiA_prenylTrfase_CS"/>
</dbReference>
<dbReference type="InterPro" id="IPR044878">
    <property type="entry name" value="UbiA_sf"/>
</dbReference>
<dbReference type="NCBIfam" id="TIGR01474">
    <property type="entry name" value="ubiA_proteo"/>
    <property type="match status" value="1"/>
</dbReference>
<dbReference type="PANTHER" id="PTHR11048:SF28">
    <property type="entry name" value="4-HYDROXYBENZOATE POLYPRENYLTRANSFERASE, MITOCHONDRIAL"/>
    <property type="match status" value="1"/>
</dbReference>
<dbReference type="PANTHER" id="PTHR11048">
    <property type="entry name" value="PRENYLTRANSFERASES"/>
    <property type="match status" value="1"/>
</dbReference>
<dbReference type="Pfam" id="PF01040">
    <property type="entry name" value="UbiA"/>
    <property type="match status" value="1"/>
</dbReference>
<dbReference type="PROSITE" id="PS00943">
    <property type="entry name" value="UBIA"/>
    <property type="match status" value="1"/>
</dbReference>
<comment type="function">
    <text evidence="1">Catalyzes the prenylation of para-hydroxybenzoate (PHB) with an all-trans polyprenyl group. Mediates the second step in the final reaction sequence of ubiquinone-8 (UQ-8) biosynthesis, which is the condensation of the polyisoprenoid side chain with PHB, generating the first membrane-bound Q intermediate 3-octaprenyl-4-hydroxybenzoate.</text>
</comment>
<comment type="catalytic activity">
    <reaction evidence="1">
        <text>all-trans-octaprenyl diphosphate + 4-hydroxybenzoate = 4-hydroxy-3-(all-trans-octaprenyl)benzoate + diphosphate</text>
        <dbReference type="Rhea" id="RHEA:27782"/>
        <dbReference type="ChEBI" id="CHEBI:1617"/>
        <dbReference type="ChEBI" id="CHEBI:17879"/>
        <dbReference type="ChEBI" id="CHEBI:33019"/>
        <dbReference type="ChEBI" id="CHEBI:57711"/>
        <dbReference type="EC" id="2.5.1.39"/>
    </reaction>
</comment>
<comment type="cofactor">
    <cofactor evidence="1">
        <name>Mg(2+)</name>
        <dbReference type="ChEBI" id="CHEBI:18420"/>
    </cofactor>
</comment>
<comment type="pathway">
    <text evidence="1">Cofactor biosynthesis; ubiquinone biosynthesis.</text>
</comment>
<comment type="subcellular location">
    <subcellularLocation>
        <location evidence="1">Cell inner membrane</location>
        <topology evidence="1">Multi-pass membrane protein</topology>
    </subcellularLocation>
</comment>
<comment type="similarity">
    <text evidence="1">Belongs to the UbiA prenyltransferase family.</text>
</comment>
<accession>B1KKU2</accession>